<dbReference type="EC" id="3.6.1.1" evidence="1"/>
<dbReference type="EMBL" id="CP001615">
    <property type="protein sequence ID" value="ACQ70892.1"/>
    <property type="molecule type" value="Genomic_DNA"/>
</dbReference>
<dbReference type="RefSeq" id="WP_015880451.1">
    <property type="nucleotide sequence ID" value="NC_012673.1"/>
</dbReference>
<dbReference type="SMR" id="C4L0S9"/>
<dbReference type="STRING" id="360911.EAT1b_1968"/>
<dbReference type="KEGG" id="eat:EAT1b_1968"/>
<dbReference type="eggNOG" id="COG1227">
    <property type="taxonomic scope" value="Bacteria"/>
</dbReference>
<dbReference type="HOGENOM" id="CLU_025243_0_1_9"/>
<dbReference type="OrthoDB" id="9766150at2"/>
<dbReference type="Proteomes" id="UP000000716">
    <property type="component" value="Chromosome"/>
</dbReference>
<dbReference type="GO" id="GO:0005737">
    <property type="term" value="C:cytoplasm"/>
    <property type="evidence" value="ECO:0007669"/>
    <property type="project" value="UniProtKB-SubCell"/>
</dbReference>
<dbReference type="GO" id="GO:0004427">
    <property type="term" value="F:inorganic diphosphate phosphatase activity"/>
    <property type="evidence" value="ECO:0007669"/>
    <property type="project" value="UniProtKB-UniRule"/>
</dbReference>
<dbReference type="GO" id="GO:0030145">
    <property type="term" value="F:manganese ion binding"/>
    <property type="evidence" value="ECO:0007669"/>
    <property type="project" value="UniProtKB-UniRule"/>
</dbReference>
<dbReference type="FunFam" id="3.10.310.20:FF:000001">
    <property type="entry name" value="Probable manganese-dependent inorganic pyrophosphatase"/>
    <property type="match status" value="1"/>
</dbReference>
<dbReference type="FunFam" id="3.90.1640.10:FF:000001">
    <property type="entry name" value="Probable manganese-dependent inorganic pyrophosphatase"/>
    <property type="match status" value="1"/>
</dbReference>
<dbReference type="Gene3D" id="3.10.310.20">
    <property type="entry name" value="DHHA2 domain"/>
    <property type="match status" value="1"/>
</dbReference>
<dbReference type="Gene3D" id="3.90.1640.10">
    <property type="entry name" value="inorganic pyrophosphatase (n-terminal core)"/>
    <property type="match status" value="1"/>
</dbReference>
<dbReference type="HAMAP" id="MF_00207">
    <property type="entry name" value="PPase_C"/>
    <property type="match status" value="1"/>
</dbReference>
<dbReference type="InterPro" id="IPR001667">
    <property type="entry name" value="DDH_dom"/>
</dbReference>
<dbReference type="InterPro" id="IPR038763">
    <property type="entry name" value="DHH_sf"/>
</dbReference>
<dbReference type="InterPro" id="IPR004097">
    <property type="entry name" value="DHHA2"/>
</dbReference>
<dbReference type="InterPro" id="IPR038222">
    <property type="entry name" value="DHHA2_dom_sf"/>
</dbReference>
<dbReference type="InterPro" id="IPR022934">
    <property type="entry name" value="Mn-dep_inorganic_PyrPase"/>
</dbReference>
<dbReference type="NCBIfam" id="NF003877">
    <property type="entry name" value="PRK05427.1"/>
    <property type="match status" value="1"/>
</dbReference>
<dbReference type="PANTHER" id="PTHR12112">
    <property type="entry name" value="BNIP - RELATED"/>
    <property type="match status" value="1"/>
</dbReference>
<dbReference type="PANTHER" id="PTHR12112:SF22">
    <property type="entry name" value="MANGANESE-DEPENDENT INORGANIC PYROPHOSPHATASE-RELATED"/>
    <property type="match status" value="1"/>
</dbReference>
<dbReference type="Pfam" id="PF01368">
    <property type="entry name" value="DHH"/>
    <property type="match status" value="1"/>
</dbReference>
<dbReference type="Pfam" id="PF02833">
    <property type="entry name" value="DHHA2"/>
    <property type="match status" value="1"/>
</dbReference>
<dbReference type="SMART" id="SM01131">
    <property type="entry name" value="DHHA2"/>
    <property type="match status" value="1"/>
</dbReference>
<dbReference type="SUPFAM" id="SSF64182">
    <property type="entry name" value="DHH phosphoesterases"/>
    <property type="match status" value="1"/>
</dbReference>
<keyword id="KW-0963">Cytoplasm</keyword>
<keyword id="KW-0378">Hydrolase</keyword>
<keyword id="KW-0464">Manganese</keyword>
<keyword id="KW-0479">Metal-binding</keyword>
<feature type="chain" id="PRO_1000204160" description="Probable manganese-dependent inorganic pyrophosphatase">
    <location>
        <begin position="1"/>
        <end position="309"/>
    </location>
</feature>
<feature type="binding site" evidence="1">
    <location>
        <position position="9"/>
    </location>
    <ligand>
        <name>Mn(2+)</name>
        <dbReference type="ChEBI" id="CHEBI:29035"/>
        <label>1</label>
    </ligand>
</feature>
<feature type="binding site" evidence="1">
    <location>
        <position position="13"/>
    </location>
    <ligand>
        <name>Mn(2+)</name>
        <dbReference type="ChEBI" id="CHEBI:29035"/>
        <label>1</label>
    </ligand>
</feature>
<feature type="binding site" evidence="1">
    <location>
        <position position="15"/>
    </location>
    <ligand>
        <name>Mn(2+)</name>
        <dbReference type="ChEBI" id="CHEBI:29035"/>
        <label>2</label>
    </ligand>
</feature>
<feature type="binding site" evidence="1">
    <location>
        <position position="75"/>
    </location>
    <ligand>
        <name>Mn(2+)</name>
        <dbReference type="ChEBI" id="CHEBI:29035"/>
        <label>1</label>
    </ligand>
</feature>
<feature type="binding site" evidence="1">
    <location>
        <position position="75"/>
    </location>
    <ligand>
        <name>Mn(2+)</name>
        <dbReference type="ChEBI" id="CHEBI:29035"/>
        <label>2</label>
    </ligand>
</feature>
<feature type="binding site" evidence="1">
    <location>
        <position position="97"/>
    </location>
    <ligand>
        <name>Mn(2+)</name>
        <dbReference type="ChEBI" id="CHEBI:29035"/>
        <label>2</label>
    </ligand>
</feature>
<feature type="binding site" evidence="1">
    <location>
        <position position="149"/>
    </location>
    <ligand>
        <name>Mn(2+)</name>
        <dbReference type="ChEBI" id="CHEBI:29035"/>
        <label>2</label>
    </ligand>
</feature>
<evidence type="ECO:0000255" key="1">
    <source>
        <dbReference type="HAMAP-Rule" id="MF_00207"/>
    </source>
</evidence>
<comment type="catalytic activity">
    <reaction evidence="1">
        <text>diphosphate + H2O = 2 phosphate + H(+)</text>
        <dbReference type="Rhea" id="RHEA:24576"/>
        <dbReference type="ChEBI" id="CHEBI:15377"/>
        <dbReference type="ChEBI" id="CHEBI:15378"/>
        <dbReference type="ChEBI" id="CHEBI:33019"/>
        <dbReference type="ChEBI" id="CHEBI:43474"/>
        <dbReference type="EC" id="3.6.1.1"/>
    </reaction>
</comment>
<comment type="cofactor">
    <cofactor evidence="1">
        <name>Mn(2+)</name>
        <dbReference type="ChEBI" id="CHEBI:29035"/>
    </cofactor>
    <text evidence="1">Binds 2 manganese ions per subunit.</text>
</comment>
<comment type="subcellular location">
    <subcellularLocation>
        <location evidence="1">Cytoplasm</location>
    </subcellularLocation>
</comment>
<comment type="similarity">
    <text evidence="1">Belongs to the PPase class C family.</text>
</comment>
<reference key="1">
    <citation type="journal article" date="2011" name="J. Bacteriol.">
        <title>Complete genome sequence of the Thermophilic Bacterium Exiguobacterium sp. AT1b.</title>
        <authorList>
            <person name="Vishnivetskaya T.A."/>
            <person name="Lucas S."/>
            <person name="Copeland A."/>
            <person name="Lapidus A."/>
            <person name="Glavina del Rio T."/>
            <person name="Dalin E."/>
            <person name="Tice H."/>
            <person name="Bruce D.C."/>
            <person name="Goodwin L.A."/>
            <person name="Pitluck S."/>
            <person name="Saunders E."/>
            <person name="Brettin T."/>
            <person name="Detter C."/>
            <person name="Han C."/>
            <person name="Larimer F."/>
            <person name="Land M.L."/>
            <person name="Hauser L.J."/>
            <person name="Kyrpides N.C."/>
            <person name="Ovchinnikova G."/>
            <person name="Kathariou S."/>
            <person name="Ramaley R.F."/>
            <person name="Rodrigues D.F."/>
            <person name="Hendrix C."/>
            <person name="Richardson P."/>
            <person name="Tiedje J.M."/>
        </authorList>
    </citation>
    <scope>NUCLEOTIDE SEQUENCE [LARGE SCALE GENOMIC DNA]</scope>
    <source>
        <strain>ATCC BAA-1283 / AT1b</strain>
    </source>
</reference>
<protein>
    <recommendedName>
        <fullName evidence="1">Probable manganese-dependent inorganic pyrophosphatase</fullName>
        <ecNumber evidence="1">3.6.1.1</ecNumber>
    </recommendedName>
    <alternativeName>
        <fullName evidence="1">Pyrophosphate phospho-hydrolase</fullName>
        <shortName evidence="1">PPase</shortName>
    </alternativeName>
</protein>
<accession>C4L0S9</accession>
<gene>
    <name evidence="1" type="primary">ppaC</name>
    <name type="ordered locus">EAT1b_1968</name>
</gene>
<name>PPAC_EXISA</name>
<organism>
    <name type="scientific">Exiguobacterium sp. (strain ATCC BAA-1283 / AT1b)</name>
    <dbReference type="NCBI Taxonomy" id="360911"/>
    <lineage>
        <taxon>Bacteria</taxon>
        <taxon>Bacillati</taxon>
        <taxon>Bacillota</taxon>
        <taxon>Bacilli</taxon>
        <taxon>Bacillales</taxon>
        <taxon>Bacillales Family XII. Incertae Sedis</taxon>
        <taxon>Exiguobacterium</taxon>
    </lineage>
</organism>
<proteinExistence type="inferred from homology"/>
<sequence length="309" mass="33634">MSTVLVFGHKNPDTDTITSALAYAELKKKLGMDAEAVRLGEVNGETQYALDHFRVKAPRLIESVKGEAEEVILVDHNEFQQSADGIEDVRILEVIDHHRIANFQTADPLYYRAEPVGCTATILLKLYKEHGVEIAADMAGLMLSAIISDSLLFKSPTCTDEDIKAAKELAEIAGVDAETYGLEMLKAGADLSQKTIEELISLDAKEFAMGDYRVEIAQVNTVDANDVLNRKAEVEAAIANTVAAKNLDLFVFAITNILTNDSEAIVVGPKPELFEQAFNVTLQNGLATLPGVVSRKKQIVPFLTEAATK</sequence>